<proteinExistence type="inferred from homology"/>
<keyword id="KW-0963">Cytoplasm</keyword>
<keyword id="KW-0489">Methyltransferase</keyword>
<keyword id="KW-1185">Reference proteome</keyword>
<keyword id="KW-0949">S-adenosyl-L-methionine</keyword>
<keyword id="KW-0808">Transferase</keyword>
<keyword id="KW-0819">tRNA processing</keyword>
<feature type="chain" id="PRO_0000387435" description="tRNA1(Val) (adenine(37)-N6)-methyltransferase">
    <location>
        <begin position="1"/>
        <end position="245"/>
    </location>
</feature>
<accession>Q32CU6</accession>
<reference key="1">
    <citation type="journal article" date="2005" name="Nucleic Acids Res.">
        <title>Genome dynamics and diversity of Shigella species, the etiologic agents of bacillary dysentery.</title>
        <authorList>
            <person name="Yang F."/>
            <person name="Yang J."/>
            <person name="Zhang X."/>
            <person name="Chen L."/>
            <person name="Jiang Y."/>
            <person name="Yan Y."/>
            <person name="Tang X."/>
            <person name="Wang J."/>
            <person name="Xiong Z."/>
            <person name="Dong J."/>
            <person name="Xue Y."/>
            <person name="Zhu Y."/>
            <person name="Xu X."/>
            <person name="Sun L."/>
            <person name="Chen S."/>
            <person name="Nie H."/>
            <person name="Peng J."/>
            <person name="Xu J."/>
            <person name="Wang Y."/>
            <person name="Yuan Z."/>
            <person name="Wen Y."/>
            <person name="Yao Z."/>
            <person name="Shen Y."/>
            <person name="Qiang B."/>
            <person name="Hou Y."/>
            <person name="Yu J."/>
            <person name="Jin Q."/>
        </authorList>
    </citation>
    <scope>NUCLEOTIDE SEQUENCE [LARGE SCALE GENOMIC DNA]</scope>
    <source>
        <strain>Sd197</strain>
    </source>
</reference>
<gene>
    <name evidence="1" type="primary">yfiC</name>
    <name type="ordered locus">SDY_2816</name>
</gene>
<name>TRMN6_SHIDS</name>
<dbReference type="EC" id="2.1.1.223" evidence="1"/>
<dbReference type="EMBL" id="CP000034">
    <property type="protein sequence ID" value="ABB62859.1"/>
    <property type="status" value="ALT_INIT"/>
    <property type="molecule type" value="Genomic_DNA"/>
</dbReference>
<dbReference type="RefSeq" id="WP_005017152.1">
    <property type="nucleotide sequence ID" value="NC_007606.1"/>
</dbReference>
<dbReference type="RefSeq" id="YP_404350.1">
    <property type="nucleotide sequence ID" value="NC_007606.1"/>
</dbReference>
<dbReference type="SMR" id="Q32CU6"/>
<dbReference type="STRING" id="300267.SDY_2816"/>
<dbReference type="EnsemblBacteria" id="ABB62859">
    <property type="protein sequence ID" value="ABB62859"/>
    <property type="gene ID" value="SDY_2816"/>
</dbReference>
<dbReference type="KEGG" id="sdy:SDY_2816"/>
<dbReference type="PATRIC" id="fig|300267.13.peg.3392"/>
<dbReference type="HOGENOM" id="CLU_061983_0_0_6"/>
<dbReference type="Proteomes" id="UP000002716">
    <property type="component" value="Chromosome"/>
</dbReference>
<dbReference type="GO" id="GO:0005737">
    <property type="term" value="C:cytoplasm"/>
    <property type="evidence" value="ECO:0007669"/>
    <property type="project" value="UniProtKB-SubCell"/>
</dbReference>
<dbReference type="GO" id="GO:0003676">
    <property type="term" value="F:nucleic acid binding"/>
    <property type="evidence" value="ECO:0007669"/>
    <property type="project" value="InterPro"/>
</dbReference>
<dbReference type="GO" id="GO:0016430">
    <property type="term" value="F:tRNA (adenine-N6)-methyltransferase activity"/>
    <property type="evidence" value="ECO:0007669"/>
    <property type="project" value="UniProtKB-UniRule"/>
</dbReference>
<dbReference type="GO" id="GO:0032259">
    <property type="term" value="P:methylation"/>
    <property type="evidence" value="ECO:0007669"/>
    <property type="project" value="UniProtKB-KW"/>
</dbReference>
<dbReference type="GO" id="GO:0008033">
    <property type="term" value="P:tRNA processing"/>
    <property type="evidence" value="ECO:0007669"/>
    <property type="project" value="UniProtKB-UniRule"/>
</dbReference>
<dbReference type="CDD" id="cd02440">
    <property type="entry name" value="AdoMet_MTases"/>
    <property type="match status" value="1"/>
</dbReference>
<dbReference type="FunFam" id="3.40.50.150:FF:000087">
    <property type="entry name" value="tRNA1(Val) (adenine(37)-N6)-methyltransferase"/>
    <property type="match status" value="1"/>
</dbReference>
<dbReference type="Gene3D" id="3.40.50.150">
    <property type="entry name" value="Vaccinia Virus protein VP39"/>
    <property type="match status" value="1"/>
</dbReference>
<dbReference type="HAMAP" id="MF_01872">
    <property type="entry name" value="tRNA_methyltr_YfiC"/>
    <property type="match status" value="1"/>
</dbReference>
<dbReference type="InterPro" id="IPR002052">
    <property type="entry name" value="DNA_methylase_N6_adenine_CS"/>
</dbReference>
<dbReference type="InterPro" id="IPR029063">
    <property type="entry name" value="SAM-dependent_MTases_sf"/>
</dbReference>
<dbReference type="InterPro" id="IPR007848">
    <property type="entry name" value="Small_mtfrase_dom"/>
</dbReference>
<dbReference type="InterPro" id="IPR050210">
    <property type="entry name" value="tRNA_Adenine-N(6)_MTase"/>
</dbReference>
<dbReference type="InterPro" id="IPR022882">
    <property type="entry name" value="tRNA_adenine-N6_MeTrfase"/>
</dbReference>
<dbReference type="NCBIfam" id="NF047853">
    <property type="entry name" value="tRm6a37MtseTrmN"/>
    <property type="match status" value="1"/>
</dbReference>
<dbReference type="PANTHER" id="PTHR47739">
    <property type="entry name" value="TRNA1(VAL) (ADENINE(37)-N6)-METHYLTRANSFERASE"/>
    <property type="match status" value="1"/>
</dbReference>
<dbReference type="PANTHER" id="PTHR47739:SF1">
    <property type="entry name" value="TRNA1(VAL) (ADENINE(37)-N6)-METHYLTRANSFERASE"/>
    <property type="match status" value="1"/>
</dbReference>
<dbReference type="Pfam" id="PF05175">
    <property type="entry name" value="MTS"/>
    <property type="match status" value="1"/>
</dbReference>
<dbReference type="SUPFAM" id="SSF53335">
    <property type="entry name" value="S-adenosyl-L-methionine-dependent methyltransferases"/>
    <property type="match status" value="1"/>
</dbReference>
<dbReference type="PROSITE" id="PS00092">
    <property type="entry name" value="N6_MTASE"/>
    <property type="match status" value="1"/>
</dbReference>
<protein>
    <recommendedName>
        <fullName evidence="1">tRNA1(Val) (adenine(37)-N6)-methyltransferase</fullName>
        <ecNumber evidence="1">2.1.1.223</ecNumber>
    </recommendedName>
    <alternativeName>
        <fullName evidence="1">tRNA m6A37 methyltransferase</fullName>
    </alternativeName>
</protein>
<sequence length="245" mass="27244">MSQSTSVLRRNGFTFKQFFVAHDRCAMKVGTDGILLGAWAPVAGVKRCLDIGAGSGLLALMLAQRTDDSVMIDAVELESEAAAQAQENINQSPWAERINVHTADIQQWITQQTVRFDLIISNPPYYQQGVECSTPQREQARYTTTLDHPSLLACAAECITEEGFFCVVLPEQIGNGFTELALSMGWHLRLRTDVAENEARLPHRVLLAFSPKAGECFSDRLIIRGSDQNYSEAYTALTQAFYLFM</sequence>
<evidence type="ECO:0000255" key="1">
    <source>
        <dbReference type="HAMAP-Rule" id="MF_01872"/>
    </source>
</evidence>
<evidence type="ECO:0000305" key="2"/>
<comment type="function">
    <text evidence="1">Specifically methylates the adenine in position 37 of tRNA(1)(Val) (anticodon cmo5UAC).</text>
</comment>
<comment type="catalytic activity">
    <reaction evidence="1">
        <text>adenosine(37) in tRNA1(Val) + S-adenosyl-L-methionine = N(6)-methyladenosine(37) in tRNA1(Val) + S-adenosyl-L-homocysteine + H(+)</text>
        <dbReference type="Rhea" id="RHEA:43160"/>
        <dbReference type="Rhea" id="RHEA-COMP:10369"/>
        <dbReference type="Rhea" id="RHEA-COMP:10370"/>
        <dbReference type="ChEBI" id="CHEBI:15378"/>
        <dbReference type="ChEBI" id="CHEBI:57856"/>
        <dbReference type="ChEBI" id="CHEBI:59789"/>
        <dbReference type="ChEBI" id="CHEBI:74411"/>
        <dbReference type="ChEBI" id="CHEBI:74449"/>
        <dbReference type="EC" id="2.1.1.223"/>
    </reaction>
</comment>
<comment type="subcellular location">
    <subcellularLocation>
        <location evidence="1">Cytoplasm</location>
    </subcellularLocation>
</comment>
<comment type="similarity">
    <text evidence="1">Belongs to the methyltransferase superfamily. tRNA (adenine-N(6)-)-methyltransferase family.</text>
</comment>
<comment type="sequence caution" evidence="2">
    <conflict type="erroneous initiation">
        <sequence resource="EMBL-CDS" id="ABB62859"/>
    </conflict>
</comment>
<organism>
    <name type="scientific">Shigella dysenteriae serotype 1 (strain Sd197)</name>
    <dbReference type="NCBI Taxonomy" id="300267"/>
    <lineage>
        <taxon>Bacteria</taxon>
        <taxon>Pseudomonadati</taxon>
        <taxon>Pseudomonadota</taxon>
        <taxon>Gammaproteobacteria</taxon>
        <taxon>Enterobacterales</taxon>
        <taxon>Enterobacteriaceae</taxon>
        <taxon>Shigella</taxon>
    </lineage>
</organism>